<accession>B4RHR0</accession>
<keyword id="KW-0997">Cell inner membrane</keyword>
<keyword id="KW-1003">Cell membrane</keyword>
<keyword id="KW-0201">Cytochrome c-type biogenesis</keyword>
<keyword id="KW-0349">Heme</keyword>
<keyword id="KW-0408">Iron</keyword>
<keyword id="KW-0472">Membrane</keyword>
<keyword id="KW-0479">Metal-binding</keyword>
<keyword id="KW-1185">Reference proteome</keyword>
<keyword id="KW-0735">Signal-anchor</keyword>
<keyword id="KW-0812">Transmembrane</keyword>
<keyword id="KW-1133">Transmembrane helix</keyword>
<dbReference type="EMBL" id="CP000747">
    <property type="protein sequence ID" value="ACG79101.1"/>
    <property type="molecule type" value="Genomic_DNA"/>
</dbReference>
<dbReference type="RefSeq" id="WP_012523239.1">
    <property type="nucleotide sequence ID" value="NC_011144.1"/>
</dbReference>
<dbReference type="SMR" id="B4RHR0"/>
<dbReference type="STRING" id="450851.PHZ_c2692"/>
<dbReference type="KEGG" id="pzu:PHZ_c2692"/>
<dbReference type="eggNOG" id="COG2332">
    <property type="taxonomic scope" value="Bacteria"/>
</dbReference>
<dbReference type="HOGENOM" id="CLU_079503_1_1_5"/>
<dbReference type="OrthoDB" id="9793584at2"/>
<dbReference type="Proteomes" id="UP000001868">
    <property type="component" value="Chromosome"/>
</dbReference>
<dbReference type="GO" id="GO:0005886">
    <property type="term" value="C:plasma membrane"/>
    <property type="evidence" value="ECO:0007669"/>
    <property type="project" value="UniProtKB-SubCell"/>
</dbReference>
<dbReference type="GO" id="GO:0020037">
    <property type="term" value="F:heme binding"/>
    <property type="evidence" value="ECO:0007669"/>
    <property type="project" value="InterPro"/>
</dbReference>
<dbReference type="GO" id="GO:0046872">
    <property type="term" value="F:metal ion binding"/>
    <property type="evidence" value="ECO:0007669"/>
    <property type="project" value="UniProtKB-KW"/>
</dbReference>
<dbReference type="GO" id="GO:0017004">
    <property type="term" value="P:cytochrome complex assembly"/>
    <property type="evidence" value="ECO:0007669"/>
    <property type="project" value="UniProtKB-KW"/>
</dbReference>
<dbReference type="Gene3D" id="2.40.50.140">
    <property type="entry name" value="Nucleic acid-binding proteins"/>
    <property type="match status" value="1"/>
</dbReference>
<dbReference type="HAMAP" id="MF_01959">
    <property type="entry name" value="CcmE"/>
    <property type="match status" value="1"/>
</dbReference>
<dbReference type="InterPro" id="IPR004329">
    <property type="entry name" value="CcmE"/>
</dbReference>
<dbReference type="InterPro" id="IPR036127">
    <property type="entry name" value="CcmE-like_sf"/>
</dbReference>
<dbReference type="InterPro" id="IPR012340">
    <property type="entry name" value="NA-bd_OB-fold"/>
</dbReference>
<dbReference type="NCBIfam" id="NF009727">
    <property type="entry name" value="PRK13254.1-1"/>
    <property type="match status" value="1"/>
</dbReference>
<dbReference type="NCBIfam" id="NF009731">
    <property type="entry name" value="PRK13254.1-5"/>
    <property type="match status" value="1"/>
</dbReference>
<dbReference type="PANTHER" id="PTHR34128">
    <property type="entry name" value="CYTOCHROME C-TYPE BIOGENESIS PROTEIN CCME HOMOLOG, MITOCHONDRIAL"/>
    <property type="match status" value="1"/>
</dbReference>
<dbReference type="PANTHER" id="PTHR34128:SF2">
    <property type="entry name" value="CYTOCHROME C-TYPE BIOGENESIS PROTEIN CCME HOMOLOG, MITOCHONDRIAL"/>
    <property type="match status" value="1"/>
</dbReference>
<dbReference type="Pfam" id="PF03100">
    <property type="entry name" value="CcmE"/>
    <property type="match status" value="1"/>
</dbReference>
<dbReference type="SUPFAM" id="SSF82093">
    <property type="entry name" value="Heme chaperone CcmE"/>
    <property type="match status" value="1"/>
</dbReference>
<organism>
    <name type="scientific">Phenylobacterium zucineum (strain HLK1)</name>
    <dbReference type="NCBI Taxonomy" id="450851"/>
    <lineage>
        <taxon>Bacteria</taxon>
        <taxon>Pseudomonadati</taxon>
        <taxon>Pseudomonadota</taxon>
        <taxon>Alphaproteobacteria</taxon>
        <taxon>Caulobacterales</taxon>
        <taxon>Caulobacteraceae</taxon>
        <taxon>Phenylobacterium</taxon>
    </lineage>
</organism>
<protein>
    <recommendedName>
        <fullName evidence="1">Cytochrome c-type biogenesis protein CcmE</fullName>
    </recommendedName>
    <alternativeName>
        <fullName evidence="1">Cytochrome c maturation protein E</fullName>
    </alternativeName>
    <alternativeName>
        <fullName evidence="1">Heme chaperone CcmE</fullName>
    </alternativeName>
</protein>
<evidence type="ECO:0000255" key="1">
    <source>
        <dbReference type="HAMAP-Rule" id="MF_01959"/>
    </source>
</evidence>
<gene>
    <name evidence="1" type="primary">ccmE</name>
    <name evidence="1" type="synonym">cycJ</name>
    <name type="ordered locus">PHZ_c2692</name>
</gene>
<proteinExistence type="inferred from homology"/>
<reference key="1">
    <citation type="journal article" date="2008" name="BMC Genomics">
        <title>Complete genome of Phenylobacterium zucineum - a novel facultative intracellular bacterium isolated from human erythroleukemia cell line K562.</title>
        <authorList>
            <person name="Luo Y."/>
            <person name="Xu X."/>
            <person name="Ding Z."/>
            <person name="Liu Z."/>
            <person name="Zhang B."/>
            <person name="Yan Z."/>
            <person name="Sun J."/>
            <person name="Hu S."/>
            <person name="Hu X."/>
        </authorList>
    </citation>
    <scope>NUCLEOTIDE SEQUENCE [LARGE SCALE GENOMIC DNA]</scope>
    <source>
        <strain>HLK1</strain>
    </source>
</reference>
<sequence length="161" mass="17542">MSWLPKSPKARRRLMLVAAIAPVLAVAAGLTLWGLSDSISFFYTPSQAEAARPAPGRSIQLGGLVAAGSVVKHPDGRVEFTVADQDAEDRVLFQGDLPDLFREGQGVVAIGAFREDGVFEAKRVLAKHDERYMPREVSKALKEQGEWYGDGQRPEHQGDAL</sequence>
<comment type="function">
    <text evidence="1">Heme chaperone required for the biogenesis of c-type cytochromes. Transiently binds heme delivered by CcmC and transfers the heme to apo-cytochromes in a process facilitated by CcmF and CcmH.</text>
</comment>
<comment type="subcellular location">
    <subcellularLocation>
        <location evidence="1">Cell inner membrane</location>
        <topology evidence="1">Single-pass type II membrane protein</topology>
        <orientation evidence="1">Periplasmic side</orientation>
    </subcellularLocation>
</comment>
<comment type="similarity">
    <text evidence="1">Belongs to the CcmE/CycJ family.</text>
</comment>
<name>CCME_PHEZH</name>
<feature type="chain" id="PRO_1000189039" description="Cytochrome c-type biogenesis protein CcmE">
    <location>
        <begin position="1"/>
        <end position="161"/>
    </location>
</feature>
<feature type="topological domain" description="Cytoplasmic" evidence="1">
    <location>
        <begin position="1"/>
        <end position="13"/>
    </location>
</feature>
<feature type="transmembrane region" description="Helical; Signal-anchor for type II membrane protein" evidence="1">
    <location>
        <begin position="14"/>
        <end position="34"/>
    </location>
</feature>
<feature type="topological domain" description="Periplasmic" evidence="1">
    <location>
        <begin position="35"/>
        <end position="161"/>
    </location>
</feature>
<feature type="binding site" description="covalent" evidence="1">
    <location>
        <position position="128"/>
    </location>
    <ligand>
        <name>heme</name>
        <dbReference type="ChEBI" id="CHEBI:30413"/>
    </ligand>
</feature>
<feature type="binding site" description="axial binding residue" evidence="1">
    <location>
        <position position="132"/>
    </location>
    <ligand>
        <name>heme</name>
        <dbReference type="ChEBI" id="CHEBI:30413"/>
    </ligand>
    <ligandPart>
        <name>Fe</name>
        <dbReference type="ChEBI" id="CHEBI:18248"/>
    </ligandPart>
</feature>